<gene>
    <name type="primary">pcgf5b</name>
    <name type="ORF">zgc:136815</name>
</gene>
<name>PCF5B_DANRE</name>
<sequence length="232" mass="27248">MTSHRKHLVRDFNHFITCFVCKGYLIKPTTVTECLHTFCKSCIVQHFEDSNDCPKCGIQVHETNPLEMLRLDNTLEEVIFKLVPGLREKEQQQEDEFWRRKESNDENGPMCKKRRVDEEDDDKGDGDYHRSDPQIAICLDCLRINGQMGENIVKGLMKKFIRCSTRVTVGTIKKFLSLKLKLPSSYELDVLCNGEIMGKDHTMEFIYMTRWRLRGENVYPMVLEYRPRIDFG</sequence>
<protein>
    <recommendedName>
        <fullName>Polycomb group RING finger protein 5-B</fullName>
    </recommendedName>
</protein>
<accession>Q1JPS1</accession>
<dbReference type="EMBL" id="BC116619">
    <property type="protein sequence ID" value="AAI16620.1"/>
    <property type="molecule type" value="mRNA"/>
</dbReference>
<dbReference type="RefSeq" id="NP_001038700.1">
    <property type="nucleotide sequence ID" value="NM_001045235.1"/>
</dbReference>
<dbReference type="SMR" id="Q1JPS1"/>
<dbReference type="FunCoup" id="Q1JPS1">
    <property type="interactions" value="11"/>
</dbReference>
<dbReference type="STRING" id="7955.ENSDARP00000080646"/>
<dbReference type="PaxDb" id="7955-ENSDARP00000080646"/>
<dbReference type="Ensembl" id="ENSDART00000086211">
    <property type="protein sequence ID" value="ENSDARP00000080646"/>
    <property type="gene ID" value="ENSDARG00000052388"/>
</dbReference>
<dbReference type="GeneID" id="692252"/>
<dbReference type="KEGG" id="dre:692252"/>
<dbReference type="AGR" id="ZFIN:ZDB-GENE-060512-34"/>
<dbReference type="CTD" id="692252"/>
<dbReference type="ZFIN" id="ZDB-GENE-060512-34">
    <property type="gene designation" value="pcgf5b"/>
</dbReference>
<dbReference type="eggNOG" id="KOG2660">
    <property type="taxonomic scope" value="Eukaryota"/>
</dbReference>
<dbReference type="HOGENOM" id="CLU_046427_4_1_1"/>
<dbReference type="InParanoid" id="Q1JPS1"/>
<dbReference type="OMA" id="FQREKSC"/>
<dbReference type="OrthoDB" id="1305878at2759"/>
<dbReference type="PhylomeDB" id="Q1JPS1"/>
<dbReference type="TreeFam" id="TF324206"/>
<dbReference type="PRO" id="PR:Q1JPS1"/>
<dbReference type="Proteomes" id="UP000000437">
    <property type="component" value="Chromosome 12"/>
</dbReference>
<dbReference type="Bgee" id="ENSDARG00000052388">
    <property type="expression patterns" value="Expressed in swim bladder and 25 other cell types or tissues"/>
</dbReference>
<dbReference type="ExpressionAtlas" id="Q1JPS1">
    <property type="expression patterns" value="baseline and differential"/>
</dbReference>
<dbReference type="GO" id="GO:0031519">
    <property type="term" value="C:PcG protein complex"/>
    <property type="evidence" value="ECO:0000250"/>
    <property type="project" value="UniProtKB"/>
</dbReference>
<dbReference type="GO" id="GO:0035102">
    <property type="term" value="C:PRC1 complex"/>
    <property type="evidence" value="ECO:0000318"/>
    <property type="project" value="GO_Central"/>
</dbReference>
<dbReference type="GO" id="GO:0008270">
    <property type="term" value="F:zinc ion binding"/>
    <property type="evidence" value="ECO:0007669"/>
    <property type="project" value="UniProtKB-KW"/>
</dbReference>
<dbReference type="GO" id="GO:0006357">
    <property type="term" value="P:regulation of transcription by RNA polymerase II"/>
    <property type="evidence" value="ECO:0000318"/>
    <property type="project" value="GO_Central"/>
</dbReference>
<dbReference type="CDD" id="cd17084">
    <property type="entry name" value="RAWUL_PCGF5"/>
    <property type="match status" value="1"/>
</dbReference>
<dbReference type="CDD" id="cd16737">
    <property type="entry name" value="RING-HC_PCGF5"/>
    <property type="match status" value="1"/>
</dbReference>
<dbReference type="FunFam" id="3.10.20.90:FF:000521">
    <property type="entry name" value="Polycomb group RING finger protein 5-B"/>
    <property type="match status" value="1"/>
</dbReference>
<dbReference type="FunFam" id="3.30.40.10:FF:000118">
    <property type="entry name" value="Putative polycomb group RING finger protein 5"/>
    <property type="match status" value="1"/>
</dbReference>
<dbReference type="Gene3D" id="3.10.20.90">
    <property type="entry name" value="Phosphatidylinositol 3-kinase Catalytic Subunit, Chain A, domain 1"/>
    <property type="match status" value="1"/>
</dbReference>
<dbReference type="Gene3D" id="3.30.40.10">
    <property type="entry name" value="Zinc/RING finger domain, C3HC4 (zinc finger)"/>
    <property type="match status" value="1"/>
</dbReference>
<dbReference type="InterPro" id="IPR051507">
    <property type="entry name" value="PcG_RING_finger"/>
</dbReference>
<dbReference type="InterPro" id="IPR032443">
    <property type="entry name" value="RAWUL"/>
</dbReference>
<dbReference type="InterPro" id="IPR001841">
    <property type="entry name" value="Znf_RING"/>
</dbReference>
<dbReference type="InterPro" id="IPR013083">
    <property type="entry name" value="Znf_RING/FYVE/PHD"/>
</dbReference>
<dbReference type="InterPro" id="IPR017907">
    <property type="entry name" value="Znf_RING_CS"/>
</dbReference>
<dbReference type="PANTHER" id="PTHR45893">
    <property type="entry name" value="POLYCOMB GROUP RING FINGER PROTEIN"/>
    <property type="match status" value="1"/>
</dbReference>
<dbReference type="Pfam" id="PF16207">
    <property type="entry name" value="RAWUL"/>
    <property type="match status" value="1"/>
</dbReference>
<dbReference type="Pfam" id="PF13923">
    <property type="entry name" value="zf-C3HC4_2"/>
    <property type="match status" value="1"/>
</dbReference>
<dbReference type="SMART" id="SM00184">
    <property type="entry name" value="RING"/>
    <property type="match status" value="1"/>
</dbReference>
<dbReference type="SUPFAM" id="SSF57850">
    <property type="entry name" value="RING/U-box"/>
    <property type="match status" value="1"/>
</dbReference>
<dbReference type="PROSITE" id="PS00518">
    <property type="entry name" value="ZF_RING_1"/>
    <property type="match status" value="1"/>
</dbReference>
<dbReference type="PROSITE" id="PS50089">
    <property type="entry name" value="ZF_RING_2"/>
    <property type="match status" value="1"/>
</dbReference>
<comment type="function">
    <text evidence="1">Component of Polycomb group (PcG) multiprotein complexes; the complex class is required to maintain the transcriptionally repressive state of some genes.</text>
</comment>
<comment type="subunit">
    <text evidence="1">Component of a PRC1-like complex.</text>
</comment>
<comment type="subcellular location">
    <subcellularLocation>
        <location evidence="1">Nucleus</location>
    </subcellularLocation>
</comment>
<proteinExistence type="evidence at transcript level"/>
<keyword id="KW-0479">Metal-binding</keyword>
<keyword id="KW-0539">Nucleus</keyword>
<keyword id="KW-1185">Reference proteome</keyword>
<keyword id="KW-0678">Repressor</keyword>
<keyword id="KW-0804">Transcription</keyword>
<keyword id="KW-0805">Transcription regulation</keyword>
<keyword id="KW-0862">Zinc</keyword>
<keyword id="KW-0863">Zinc-finger</keyword>
<evidence type="ECO:0000250" key="1"/>
<evidence type="ECO:0000255" key="2">
    <source>
        <dbReference type="PROSITE-ProRule" id="PRU00175"/>
    </source>
</evidence>
<evidence type="ECO:0000256" key="3">
    <source>
        <dbReference type="SAM" id="MobiDB-lite"/>
    </source>
</evidence>
<reference key="1">
    <citation type="submission" date="2006-05" db="EMBL/GenBank/DDBJ databases">
        <authorList>
            <consortium name="NIH - Zebrafish Gene Collection (ZGC) project"/>
        </authorList>
    </citation>
    <scope>NUCLEOTIDE SEQUENCE [LARGE SCALE MRNA]</scope>
</reference>
<feature type="chain" id="PRO_0000277870" description="Polycomb group RING finger protein 5-B">
    <location>
        <begin position="1"/>
        <end position="232"/>
    </location>
</feature>
<feature type="zinc finger region" description="RING-type" evidence="2">
    <location>
        <begin position="18"/>
        <end position="57"/>
    </location>
</feature>
<feature type="region of interest" description="Disordered" evidence="3">
    <location>
        <begin position="93"/>
        <end position="128"/>
    </location>
</feature>
<feature type="compositionally biased region" description="Basic and acidic residues" evidence="3">
    <location>
        <begin position="93"/>
        <end position="104"/>
    </location>
</feature>
<organism>
    <name type="scientific">Danio rerio</name>
    <name type="common">Zebrafish</name>
    <name type="synonym">Brachydanio rerio</name>
    <dbReference type="NCBI Taxonomy" id="7955"/>
    <lineage>
        <taxon>Eukaryota</taxon>
        <taxon>Metazoa</taxon>
        <taxon>Chordata</taxon>
        <taxon>Craniata</taxon>
        <taxon>Vertebrata</taxon>
        <taxon>Euteleostomi</taxon>
        <taxon>Actinopterygii</taxon>
        <taxon>Neopterygii</taxon>
        <taxon>Teleostei</taxon>
        <taxon>Ostariophysi</taxon>
        <taxon>Cypriniformes</taxon>
        <taxon>Danionidae</taxon>
        <taxon>Danioninae</taxon>
        <taxon>Danio</taxon>
    </lineage>
</organism>